<evidence type="ECO:0000255" key="1">
    <source>
        <dbReference type="HAMAP-Rule" id="MF_00353"/>
    </source>
</evidence>
<name>CHLB_GLOVI</name>
<organism>
    <name type="scientific">Gloeobacter violaceus (strain ATCC 29082 / PCC 7421)</name>
    <dbReference type="NCBI Taxonomy" id="251221"/>
    <lineage>
        <taxon>Bacteria</taxon>
        <taxon>Bacillati</taxon>
        <taxon>Cyanobacteriota</taxon>
        <taxon>Cyanophyceae</taxon>
        <taxon>Gloeobacterales</taxon>
        <taxon>Gloeobacteraceae</taxon>
        <taxon>Gloeobacter</taxon>
    </lineage>
</organism>
<proteinExistence type="inferred from homology"/>
<protein>
    <recommendedName>
        <fullName evidence="1">Light-independent protochlorophyllide reductase subunit B</fullName>
        <shortName evidence="1">DPOR subunit B</shortName>
        <shortName evidence="1">LI-POR subunit B</shortName>
        <ecNumber evidence="1">1.3.7.7</ecNumber>
    </recommendedName>
</protein>
<sequence>MKLAYWMYAGPAHIGTLRIATSFKNVHAIMHAPLGDDYFNVMRSMLERERDFTPVTASVVDRKVLGRGSQDKVVTNIVRKDQEEAPDLIVLTPTCTSSILQEDLQNFVARAQEQSKADVLLADVNHYRYNEFTAADRTLTQIVSYYIEKLAGNLPARSEKPTANILGISTLGFHNHHDCRELKQLLADLGVEVNVVAPEGCSVHDIQKMPSAWFNVVPYRELGRGAAEYLQRQTGQPLIDITPMGILQTARFIRAVQQILNTQGARVEYEEYIRSQTLFVSQAAWFSRSIDCQNLQGKRAVVYGDLTHAAAMTRILAREMGVRVVWAGTFCKYDAEWFKAEVADLCDEVLISDDHAEVGDRIAAAEPAAIFGTQMERHIGKRLNIPCGVISSPIHIQNFPVGYRPFLGYEGTNQIADLVYNSFTLGMEDHLLEVFGGHDTKEVITKTMTAQSDLEWDEAATRELAKIPGFVRSKVKRNTEKFARESGRDKITLEVMYAAKEAAGA</sequence>
<keyword id="KW-0004">4Fe-4S</keyword>
<keyword id="KW-0067">ATP-binding</keyword>
<keyword id="KW-0149">Chlorophyll biosynthesis</keyword>
<keyword id="KW-0408">Iron</keyword>
<keyword id="KW-0411">Iron-sulfur</keyword>
<keyword id="KW-0479">Metal-binding</keyword>
<keyword id="KW-0547">Nucleotide-binding</keyword>
<keyword id="KW-0560">Oxidoreductase</keyword>
<keyword id="KW-0602">Photosynthesis</keyword>
<keyword id="KW-1185">Reference proteome</keyword>
<feature type="chain" id="PRO_1000048402" description="Light-independent protochlorophyllide reductase subunit B">
    <location>
        <begin position="1"/>
        <end position="505"/>
    </location>
</feature>
<feature type="active site" description="Proton donor" evidence="1">
    <location>
        <position position="291"/>
    </location>
</feature>
<feature type="binding site" evidence="1">
    <location>
        <position position="36"/>
    </location>
    <ligand>
        <name>[4Fe-4S] cluster</name>
        <dbReference type="ChEBI" id="CHEBI:49883"/>
        <note>ligand shared with heterodimeric partner</note>
    </ligand>
</feature>
<feature type="binding site" evidence="1">
    <location>
        <begin position="426"/>
        <end position="427"/>
    </location>
    <ligand>
        <name>substrate</name>
    </ligand>
</feature>
<accession>Q7NP43</accession>
<gene>
    <name evidence="1" type="primary">chlB</name>
    <name type="ordered locus">glr0215</name>
</gene>
<dbReference type="EC" id="1.3.7.7" evidence="1"/>
<dbReference type="EMBL" id="BA000045">
    <property type="protein sequence ID" value="BAC88156.1"/>
    <property type="molecule type" value="Genomic_DNA"/>
</dbReference>
<dbReference type="RefSeq" id="NP_923161.1">
    <property type="nucleotide sequence ID" value="NC_005125.1"/>
</dbReference>
<dbReference type="RefSeq" id="WP_011140219.1">
    <property type="nucleotide sequence ID" value="NC_005125.1"/>
</dbReference>
<dbReference type="SMR" id="Q7NP43"/>
<dbReference type="STRING" id="251221.gene:10757687"/>
<dbReference type="EnsemblBacteria" id="BAC88156">
    <property type="protein sequence ID" value="BAC88156"/>
    <property type="gene ID" value="BAC88156"/>
</dbReference>
<dbReference type="KEGG" id="gvi:glr0215"/>
<dbReference type="PATRIC" id="fig|251221.4.peg.217"/>
<dbReference type="eggNOG" id="COG2710">
    <property type="taxonomic scope" value="Bacteria"/>
</dbReference>
<dbReference type="HOGENOM" id="CLU_025470_0_0_3"/>
<dbReference type="InParanoid" id="Q7NP43"/>
<dbReference type="OrthoDB" id="5717231at2"/>
<dbReference type="PhylomeDB" id="Q7NP43"/>
<dbReference type="UniPathway" id="UPA00670"/>
<dbReference type="Proteomes" id="UP000000557">
    <property type="component" value="Chromosome"/>
</dbReference>
<dbReference type="GO" id="GO:0051539">
    <property type="term" value="F:4 iron, 4 sulfur cluster binding"/>
    <property type="evidence" value="ECO:0007669"/>
    <property type="project" value="UniProtKB-UniRule"/>
</dbReference>
<dbReference type="GO" id="GO:0005524">
    <property type="term" value="F:ATP binding"/>
    <property type="evidence" value="ECO:0007669"/>
    <property type="project" value="UniProtKB-UniRule"/>
</dbReference>
<dbReference type="GO" id="GO:0046872">
    <property type="term" value="F:metal ion binding"/>
    <property type="evidence" value="ECO:0007669"/>
    <property type="project" value="UniProtKB-KW"/>
</dbReference>
<dbReference type="GO" id="GO:0016730">
    <property type="term" value="F:oxidoreductase activity, acting on iron-sulfur proteins as donors"/>
    <property type="evidence" value="ECO:0007669"/>
    <property type="project" value="InterPro"/>
</dbReference>
<dbReference type="GO" id="GO:0016636">
    <property type="term" value="F:oxidoreductase activity, acting on the CH-CH group of donors, iron-sulfur protein as acceptor"/>
    <property type="evidence" value="ECO:0007669"/>
    <property type="project" value="UniProtKB-UniRule"/>
</dbReference>
<dbReference type="GO" id="GO:0036068">
    <property type="term" value="P:light-independent chlorophyll biosynthetic process"/>
    <property type="evidence" value="ECO:0007669"/>
    <property type="project" value="UniProtKB-UniRule"/>
</dbReference>
<dbReference type="GO" id="GO:0019685">
    <property type="term" value="P:photosynthesis, dark reaction"/>
    <property type="evidence" value="ECO:0007669"/>
    <property type="project" value="InterPro"/>
</dbReference>
<dbReference type="CDD" id="cd01981">
    <property type="entry name" value="Pchlide_reductase_B"/>
    <property type="match status" value="1"/>
</dbReference>
<dbReference type="Gene3D" id="1.20.89.20">
    <property type="match status" value="1"/>
</dbReference>
<dbReference type="Gene3D" id="3.40.50.1980">
    <property type="entry name" value="Nitrogenase molybdenum iron protein domain"/>
    <property type="match status" value="3"/>
</dbReference>
<dbReference type="Gene3D" id="1.10.8.550">
    <property type="entry name" value="Proto-chlorophyllide reductase 57 kD subunit B"/>
    <property type="match status" value="1"/>
</dbReference>
<dbReference type="HAMAP" id="MF_00353">
    <property type="entry name" value="ChlB_BchB"/>
    <property type="match status" value="1"/>
</dbReference>
<dbReference type="InterPro" id="IPR050152">
    <property type="entry name" value="ChlB/BchB/BchZ"/>
</dbReference>
<dbReference type="InterPro" id="IPR013580">
    <property type="entry name" value="LI-POR_suB-like_C"/>
</dbReference>
<dbReference type="InterPro" id="IPR000510">
    <property type="entry name" value="Nase/OxRdtase_comp1"/>
</dbReference>
<dbReference type="InterPro" id="IPR042298">
    <property type="entry name" value="P-CP_red_C"/>
</dbReference>
<dbReference type="InterPro" id="IPR005969">
    <property type="entry name" value="Protochl_reductB"/>
</dbReference>
<dbReference type="InterPro" id="IPR016209">
    <property type="entry name" value="Protochlorophyllide_Rdtase"/>
</dbReference>
<dbReference type="NCBIfam" id="TIGR01278">
    <property type="entry name" value="DPOR_BchB"/>
    <property type="match status" value="1"/>
</dbReference>
<dbReference type="PANTHER" id="PTHR33712">
    <property type="entry name" value="LIGHT-INDEPENDENT PROTOCHLOROPHYLLIDE REDUCTASE SUBUNIT B"/>
    <property type="match status" value="1"/>
</dbReference>
<dbReference type="PANTHER" id="PTHR33712:SF7">
    <property type="entry name" value="LIGHT-INDEPENDENT PROTOCHLOROPHYLLIDE REDUCTASE SUBUNIT B"/>
    <property type="match status" value="1"/>
</dbReference>
<dbReference type="Pfam" id="PF00148">
    <property type="entry name" value="Oxidored_nitro"/>
    <property type="match status" value="1"/>
</dbReference>
<dbReference type="Pfam" id="PF08369">
    <property type="entry name" value="PCP_red"/>
    <property type="match status" value="1"/>
</dbReference>
<dbReference type="PIRSF" id="PIRSF000163">
    <property type="entry name" value="PCP_ChlB"/>
    <property type="match status" value="1"/>
</dbReference>
<dbReference type="SUPFAM" id="SSF53807">
    <property type="entry name" value="Helical backbone' metal receptor"/>
    <property type="match status" value="1"/>
</dbReference>
<reference key="1">
    <citation type="journal article" date="2003" name="DNA Res.">
        <title>Complete genome structure of Gloeobacter violaceus PCC 7421, a cyanobacterium that lacks thylakoids.</title>
        <authorList>
            <person name="Nakamura Y."/>
            <person name="Kaneko T."/>
            <person name="Sato S."/>
            <person name="Mimuro M."/>
            <person name="Miyashita H."/>
            <person name="Tsuchiya T."/>
            <person name="Sasamoto S."/>
            <person name="Watanabe A."/>
            <person name="Kawashima K."/>
            <person name="Kishida Y."/>
            <person name="Kiyokawa C."/>
            <person name="Kohara M."/>
            <person name="Matsumoto M."/>
            <person name="Matsuno A."/>
            <person name="Nakazaki N."/>
            <person name="Shimpo S."/>
            <person name="Takeuchi C."/>
            <person name="Yamada M."/>
            <person name="Tabata S."/>
        </authorList>
    </citation>
    <scope>NUCLEOTIDE SEQUENCE [LARGE SCALE GENOMIC DNA]</scope>
    <source>
        <strain>ATCC 29082 / PCC 7421</strain>
    </source>
</reference>
<comment type="function">
    <text evidence="1">Component of the dark-operative protochlorophyllide reductase (DPOR) that uses Mg-ATP and reduced ferredoxin to reduce ring D of protochlorophyllide (Pchlide) to form chlorophyllide a (Chlide). This reaction is light-independent. The NB-protein (ChlN-ChlB) is the catalytic component of the complex.</text>
</comment>
<comment type="catalytic activity">
    <reaction evidence="1">
        <text>chlorophyllide a + oxidized 2[4Fe-4S]-[ferredoxin] + 2 ADP + 2 phosphate = protochlorophyllide a + reduced 2[4Fe-4S]-[ferredoxin] + 2 ATP + 2 H2O</text>
        <dbReference type="Rhea" id="RHEA:28202"/>
        <dbReference type="Rhea" id="RHEA-COMP:10002"/>
        <dbReference type="Rhea" id="RHEA-COMP:10004"/>
        <dbReference type="ChEBI" id="CHEBI:15377"/>
        <dbReference type="ChEBI" id="CHEBI:30616"/>
        <dbReference type="ChEBI" id="CHEBI:33722"/>
        <dbReference type="ChEBI" id="CHEBI:33723"/>
        <dbReference type="ChEBI" id="CHEBI:43474"/>
        <dbReference type="ChEBI" id="CHEBI:83348"/>
        <dbReference type="ChEBI" id="CHEBI:83350"/>
        <dbReference type="ChEBI" id="CHEBI:456216"/>
        <dbReference type="EC" id="1.3.7.7"/>
    </reaction>
</comment>
<comment type="cofactor">
    <cofactor evidence="1">
        <name>[4Fe-4S] cluster</name>
        <dbReference type="ChEBI" id="CHEBI:49883"/>
    </cofactor>
    <text evidence="1">Binds 1 [4Fe-4S] cluster per heterodimer. The cluster is bound at the heterodimer interface by residues from both subunits.</text>
</comment>
<comment type="pathway">
    <text evidence="1">Porphyrin-containing compound metabolism; chlorophyll biosynthesis (light-independent).</text>
</comment>
<comment type="subunit">
    <text evidence="1">Protochlorophyllide reductase is composed of three subunits; ChlL, ChlN and ChlB. Forms a heterotetramer of two ChlB and two ChlN subunits.</text>
</comment>
<comment type="similarity">
    <text evidence="1">Belongs to the ChlB/BchB/BchZ family.</text>
</comment>